<organism>
    <name type="scientific">Mus musculus</name>
    <name type="common">Mouse</name>
    <dbReference type="NCBI Taxonomy" id="10090"/>
    <lineage>
        <taxon>Eukaryota</taxon>
        <taxon>Metazoa</taxon>
        <taxon>Chordata</taxon>
        <taxon>Craniata</taxon>
        <taxon>Vertebrata</taxon>
        <taxon>Euteleostomi</taxon>
        <taxon>Mammalia</taxon>
        <taxon>Eutheria</taxon>
        <taxon>Euarchontoglires</taxon>
        <taxon>Glires</taxon>
        <taxon>Rodentia</taxon>
        <taxon>Myomorpha</taxon>
        <taxon>Muroidea</taxon>
        <taxon>Muridae</taxon>
        <taxon>Murinae</taxon>
        <taxon>Mus</taxon>
        <taxon>Mus</taxon>
    </lineage>
</organism>
<gene>
    <name type="primary">Pcdh8</name>
    <name type="synonym">Papc</name>
</gene>
<evidence type="ECO:0000250" key="1"/>
<evidence type="ECO:0000250" key="2">
    <source>
        <dbReference type="UniProtKB" id="D3ZE55"/>
    </source>
</evidence>
<evidence type="ECO:0000255" key="3"/>
<evidence type="ECO:0000255" key="4">
    <source>
        <dbReference type="PROSITE-ProRule" id="PRU00043"/>
    </source>
</evidence>
<evidence type="ECO:0000256" key="5">
    <source>
        <dbReference type="SAM" id="MobiDB-lite"/>
    </source>
</evidence>
<evidence type="ECO:0000269" key="6">
    <source>
    </source>
</evidence>
<evidence type="ECO:0000303" key="7">
    <source>
    </source>
</evidence>
<evidence type="ECO:0000303" key="8">
    <source>
    </source>
</evidence>
<evidence type="ECO:0000305" key="9"/>
<dbReference type="EMBL" id="AF231125">
    <property type="protein sequence ID" value="AAF63319.1"/>
    <property type="molecule type" value="mRNA"/>
</dbReference>
<dbReference type="EMBL" id="AK048638">
    <property type="protein sequence ID" value="BAC33404.1"/>
    <property type="molecule type" value="mRNA"/>
</dbReference>
<dbReference type="EMBL" id="CH466535">
    <property type="protein sequence ID" value="EDL35755.1"/>
    <property type="molecule type" value="Genomic_DNA"/>
</dbReference>
<dbReference type="EMBL" id="BC052388">
    <property type="protein sequence ID" value="AAH52388.1"/>
    <property type="molecule type" value="mRNA"/>
</dbReference>
<dbReference type="EMBL" id="BC053008">
    <property type="protein sequence ID" value="AAH53008.1"/>
    <property type="molecule type" value="mRNA"/>
</dbReference>
<dbReference type="CCDS" id="CCDS27303.1">
    <molecule id="Q7TSK3-1"/>
</dbReference>
<dbReference type="CCDS" id="CCDS79349.1">
    <molecule id="Q7TSK3-2"/>
</dbReference>
<dbReference type="RefSeq" id="NP_001036191.1">
    <molecule id="Q7TSK3-2"/>
    <property type="nucleotide sequence ID" value="NM_001042726.4"/>
</dbReference>
<dbReference type="RefSeq" id="NP_067518.2">
    <molecule id="Q7TSK3-1"/>
    <property type="nucleotide sequence ID" value="NM_021543.5"/>
</dbReference>
<dbReference type="SMR" id="Q7TSK3"/>
<dbReference type="BioGRID" id="202045">
    <property type="interactions" value="6"/>
</dbReference>
<dbReference type="FunCoup" id="Q7TSK3">
    <property type="interactions" value="377"/>
</dbReference>
<dbReference type="IntAct" id="Q7TSK3">
    <property type="interactions" value="1"/>
</dbReference>
<dbReference type="STRING" id="10090.ENSMUSP00000045333"/>
<dbReference type="GlyCosmos" id="Q7TSK3">
    <property type="glycosylation" value="1 site, No reported glycans"/>
</dbReference>
<dbReference type="GlyGen" id="Q7TSK3">
    <property type="glycosylation" value="3 sites, 2 N-linked glycans (3 sites)"/>
</dbReference>
<dbReference type="iPTMnet" id="Q7TSK3"/>
<dbReference type="PhosphoSitePlus" id="Q7TSK3"/>
<dbReference type="PaxDb" id="10090-ENSMUSP00000045333"/>
<dbReference type="ProteomicsDB" id="288113">
    <molecule id="Q7TSK3-1"/>
</dbReference>
<dbReference type="ProteomicsDB" id="288114">
    <molecule id="Q7TSK3-2"/>
</dbReference>
<dbReference type="ProteomicsDB" id="288115">
    <molecule id="Q7TSK3-3"/>
</dbReference>
<dbReference type="Antibodypedia" id="24243">
    <property type="antibodies" value="138 antibodies from 22 providers"/>
</dbReference>
<dbReference type="DNASU" id="18530"/>
<dbReference type="Ensembl" id="ENSMUST00000039568.11">
    <molecule id="Q7TSK3-1"/>
    <property type="protein sequence ID" value="ENSMUSP00000045333.6"/>
    <property type="gene ID" value="ENSMUSG00000036422.11"/>
</dbReference>
<dbReference type="Ensembl" id="ENSMUST00000195355.2">
    <molecule id="Q7TSK3-2"/>
    <property type="protein sequence ID" value="ENSMUSP00000141417.2"/>
    <property type="gene ID" value="ENSMUSG00000036422.11"/>
</dbReference>
<dbReference type="GeneID" id="18530"/>
<dbReference type="KEGG" id="mmu:18530"/>
<dbReference type="UCSC" id="uc007uti.3">
    <molecule id="Q7TSK3-1"/>
    <property type="organism name" value="mouse"/>
</dbReference>
<dbReference type="UCSC" id="uc007utj.3">
    <molecule id="Q7TSK3-2"/>
    <property type="organism name" value="mouse"/>
</dbReference>
<dbReference type="UCSC" id="uc029smd.1">
    <molecule id="Q7TSK3-3"/>
    <property type="organism name" value="mouse"/>
</dbReference>
<dbReference type="AGR" id="MGI:1306800"/>
<dbReference type="CTD" id="5100"/>
<dbReference type="MGI" id="MGI:1306800">
    <property type="gene designation" value="Pcdh8"/>
</dbReference>
<dbReference type="VEuPathDB" id="HostDB:ENSMUSG00000036422"/>
<dbReference type="eggNOG" id="KOG3594">
    <property type="taxonomic scope" value="Eukaryota"/>
</dbReference>
<dbReference type="GeneTree" id="ENSGT00940000155219"/>
<dbReference type="HOGENOM" id="CLU_006480_1_2_1"/>
<dbReference type="InParanoid" id="Q7TSK3"/>
<dbReference type="OMA" id="SCHFEGQ"/>
<dbReference type="OrthoDB" id="6252479at2759"/>
<dbReference type="PhylomeDB" id="Q7TSK3"/>
<dbReference type="TreeFam" id="TF352008"/>
<dbReference type="BioGRID-ORCS" id="18530">
    <property type="hits" value="3 hits in 78 CRISPR screens"/>
</dbReference>
<dbReference type="PRO" id="PR:Q7TSK3"/>
<dbReference type="Proteomes" id="UP000000589">
    <property type="component" value="Chromosome 14"/>
</dbReference>
<dbReference type="RNAct" id="Q7TSK3">
    <property type="molecule type" value="protein"/>
</dbReference>
<dbReference type="Bgee" id="ENSMUSG00000036422">
    <property type="expression patterns" value="Expressed in anterior amygdaloid area and 137 other cell types or tissues"/>
</dbReference>
<dbReference type="GO" id="GO:0030425">
    <property type="term" value="C:dendrite"/>
    <property type="evidence" value="ECO:0007669"/>
    <property type="project" value="UniProtKB-SubCell"/>
</dbReference>
<dbReference type="GO" id="GO:0098978">
    <property type="term" value="C:glutamatergic synapse"/>
    <property type="evidence" value="ECO:0007669"/>
    <property type="project" value="Ensembl"/>
</dbReference>
<dbReference type="GO" id="GO:0005886">
    <property type="term" value="C:plasma membrane"/>
    <property type="evidence" value="ECO:0000250"/>
    <property type="project" value="MGI"/>
</dbReference>
<dbReference type="GO" id="GO:0045211">
    <property type="term" value="C:postsynaptic membrane"/>
    <property type="evidence" value="ECO:0007669"/>
    <property type="project" value="UniProtKB-SubCell"/>
</dbReference>
<dbReference type="GO" id="GO:0042734">
    <property type="term" value="C:presynaptic membrane"/>
    <property type="evidence" value="ECO:0007669"/>
    <property type="project" value="UniProtKB-SubCell"/>
</dbReference>
<dbReference type="GO" id="GO:0098685">
    <property type="term" value="C:Schaffer collateral - CA1 synapse"/>
    <property type="evidence" value="ECO:0007669"/>
    <property type="project" value="Ensembl"/>
</dbReference>
<dbReference type="GO" id="GO:0005509">
    <property type="term" value="F:calcium ion binding"/>
    <property type="evidence" value="ECO:0007669"/>
    <property type="project" value="InterPro"/>
</dbReference>
<dbReference type="GO" id="GO:0007268">
    <property type="term" value="P:chemical synaptic transmission"/>
    <property type="evidence" value="ECO:0007669"/>
    <property type="project" value="Ensembl"/>
</dbReference>
<dbReference type="GO" id="GO:0007156">
    <property type="term" value="P:homophilic cell adhesion via plasma membrane adhesion molecules"/>
    <property type="evidence" value="ECO:0007669"/>
    <property type="project" value="InterPro"/>
</dbReference>
<dbReference type="GO" id="GO:0050804">
    <property type="term" value="P:modulation of chemical synaptic transmission"/>
    <property type="evidence" value="ECO:0007669"/>
    <property type="project" value="Ensembl"/>
</dbReference>
<dbReference type="GO" id="GO:0016331">
    <property type="term" value="P:morphogenesis of embryonic epithelium"/>
    <property type="evidence" value="ECO:0000315"/>
    <property type="project" value="MGI"/>
</dbReference>
<dbReference type="GO" id="GO:0099179">
    <property type="term" value="P:regulation of synaptic membrane adhesion"/>
    <property type="evidence" value="ECO:0007669"/>
    <property type="project" value="Ensembl"/>
</dbReference>
<dbReference type="GO" id="GO:0001756">
    <property type="term" value="P:somitogenesis"/>
    <property type="evidence" value="ECO:0000315"/>
    <property type="project" value="MGI"/>
</dbReference>
<dbReference type="CDD" id="cd11304">
    <property type="entry name" value="Cadherin_repeat"/>
    <property type="match status" value="6"/>
</dbReference>
<dbReference type="FunFam" id="2.60.40.60:FF:000120">
    <property type="entry name" value="Protocadherin 8"/>
    <property type="match status" value="1"/>
</dbReference>
<dbReference type="FunFam" id="2.60.40.60:FF:000001">
    <property type="entry name" value="Protocadherin alpha 2"/>
    <property type="match status" value="1"/>
</dbReference>
<dbReference type="FunFam" id="2.60.40.60:FF:000002">
    <property type="entry name" value="Protocadherin alpha 2"/>
    <property type="match status" value="1"/>
</dbReference>
<dbReference type="FunFam" id="2.60.40.60:FF:000003">
    <property type="entry name" value="Protocadherin alpha 2"/>
    <property type="match status" value="1"/>
</dbReference>
<dbReference type="FunFam" id="2.60.40.60:FF:000007">
    <property type="entry name" value="Protocadherin alpha 2"/>
    <property type="match status" value="1"/>
</dbReference>
<dbReference type="FunFam" id="2.60.40.60:FF:000117">
    <property type="entry name" value="protocadherin-8 isoform X1"/>
    <property type="match status" value="1"/>
</dbReference>
<dbReference type="Gene3D" id="2.60.40.60">
    <property type="entry name" value="Cadherins"/>
    <property type="match status" value="6"/>
</dbReference>
<dbReference type="InterPro" id="IPR002126">
    <property type="entry name" value="Cadherin-like_dom"/>
</dbReference>
<dbReference type="InterPro" id="IPR015919">
    <property type="entry name" value="Cadherin-like_sf"/>
</dbReference>
<dbReference type="InterPro" id="IPR020894">
    <property type="entry name" value="Cadherin_CS"/>
</dbReference>
<dbReference type="InterPro" id="IPR013164">
    <property type="entry name" value="Cadherin_N"/>
</dbReference>
<dbReference type="InterPro" id="IPR050174">
    <property type="entry name" value="Protocadherin/Cadherin-CA"/>
</dbReference>
<dbReference type="PANTHER" id="PTHR24028">
    <property type="entry name" value="CADHERIN-87A"/>
    <property type="match status" value="1"/>
</dbReference>
<dbReference type="PANTHER" id="PTHR24028:SF46">
    <property type="entry name" value="PROTOCADHERIN-8"/>
    <property type="match status" value="1"/>
</dbReference>
<dbReference type="Pfam" id="PF00028">
    <property type="entry name" value="Cadherin"/>
    <property type="match status" value="5"/>
</dbReference>
<dbReference type="Pfam" id="PF08266">
    <property type="entry name" value="Cadherin_2"/>
    <property type="match status" value="1"/>
</dbReference>
<dbReference type="PRINTS" id="PR00205">
    <property type="entry name" value="CADHERIN"/>
</dbReference>
<dbReference type="SMART" id="SM00112">
    <property type="entry name" value="CA"/>
    <property type="match status" value="6"/>
</dbReference>
<dbReference type="SUPFAM" id="SSF49313">
    <property type="entry name" value="Cadherin-like"/>
    <property type="match status" value="6"/>
</dbReference>
<dbReference type="PROSITE" id="PS00232">
    <property type="entry name" value="CADHERIN_1"/>
    <property type="match status" value="5"/>
</dbReference>
<dbReference type="PROSITE" id="PS50268">
    <property type="entry name" value="CADHERIN_2"/>
    <property type="match status" value="6"/>
</dbReference>
<name>PCDH8_MOUSE</name>
<proteinExistence type="evidence at protein level"/>
<protein>
    <recommendedName>
        <fullName>Protocadherin-8</fullName>
    </recommendedName>
    <alternativeName>
        <fullName>Arcadlin</fullName>
    </alternativeName>
    <alternativeName>
        <fullName>Paraxial protocadherin</fullName>
    </alternativeName>
</protein>
<reference key="1">
    <citation type="submission" date="2000-02" db="EMBL/GenBank/DDBJ databases">
        <title>Mouse PAPC.</title>
        <authorList>
            <person name="Yamamoto A."/>
            <person name="Kemp C.R."/>
            <person name="De Robertis E.M."/>
        </authorList>
    </citation>
    <scope>NUCLEOTIDE SEQUENCE [MRNA] (ISOFORM 1)</scope>
</reference>
<reference key="2">
    <citation type="journal article" date="2005" name="Science">
        <title>The transcriptional landscape of the mammalian genome.</title>
        <authorList>
            <person name="Carninci P."/>
            <person name="Kasukawa T."/>
            <person name="Katayama S."/>
            <person name="Gough J."/>
            <person name="Frith M.C."/>
            <person name="Maeda N."/>
            <person name="Oyama R."/>
            <person name="Ravasi T."/>
            <person name="Lenhard B."/>
            <person name="Wells C."/>
            <person name="Kodzius R."/>
            <person name="Shimokawa K."/>
            <person name="Bajic V.B."/>
            <person name="Brenner S.E."/>
            <person name="Batalov S."/>
            <person name="Forrest A.R."/>
            <person name="Zavolan M."/>
            <person name="Davis M.J."/>
            <person name="Wilming L.G."/>
            <person name="Aidinis V."/>
            <person name="Allen J.E."/>
            <person name="Ambesi-Impiombato A."/>
            <person name="Apweiler R."/>
            <person name="Aturaliya R.N."/>
            <person name="Bailey T.L."/>
            <person name="Bansal M."/>
            <person name="Baxter L."/>
            <person name="Beisel K.W."/>
            <person name="Bersano T."/>
            <person name="Bono H."/>
            <person name="Chalk A.M."/>
            <person name="Chiu K.P."/>
            <person name="Choudhary V."/>
            <person name="Christoffels A."/>
            <person name="Clutterbuck D.R."/>
            <person name="Crowe M.L."/>
            <person name="Dalla E."/>
            <person name="Dalrymple B.P."/>
            <person name="de Bono B."/>
            <person name="Della Gatta G."/>
            <person name="di Bernardo D."/>
            <person name="Down T."/>
            <person name="Engstrom P."/>
            <person name="Fagiolini M."/>
            <person name="Faulkner G."/>
            <person name="Fletcher C.F."/>
            <person name="Fukushima T."/>
            <person name="Furuno M."/>
            <person name="Futaki S."/>
            <person name="Gariboldi M."/>
            <person name="Georgii-Hemming P."/>
            <person name="Gingeras T.R."/>
            <person name="Gojobori T."/>
            <person name="Green R.E."/>
            <person name="Gustincich S."/>
            <person name="Harbers M."/>
            <person name="Hayashi Y."/>
            <person name="Hensch T.K."/>
            <person name="Hirokawa N."/>
            <person name="Hill D."/>
            <person name="Huminiecki L."/>
            <person name="Iacono M."/>
            <person name="Ikeo K."/>
            <person name="Iwama A."/>
            <person name="Ishikawa T."/>
            <person name="Jakt M."/>
            <person name="Kanapin A."/>
            <person name="Katoh M."/>
            <person name="Kawasawa Y."/>
            <person name="Kelso J."/>
            <person name="Kitamura H."/>
            <person name="Kitano H."/>
            <person name="Kollias G."/>
            <person name="Krishnan S.P."/>
            <person name="Kruger A."/>
            <person name="Kummerfeld S.K."/>
            <person name="Kurochkin I.V."/>
            <person name="Lareau L.F."/>
            <person name="Lazarevic D."/>
            <person name="Lipovich L."/>
            <person name="Liu J."/>
            <person name="Liuni S."/>
            <person name="McWilliam S."/>
            <person name="Madan Babu M."/>
            <person name="Madera M."/>
            <person name="Marchionni L."/>
            <person name="Matsuda H."/>
            <person name="Matsuzawa S."/>
            <person name="Miki H."/>
            <person name="Mignone F."/>
            <person name="Miyake S."/>
            <person name="Morris K."/>
            <person name="Mottagui-Tabar S."/>
            <person name="Mulder N."/>
            <person name="Nakano N."/>
            <person name="Nakauchi H."/>
            <person name="Ng P."/>
            <person name="Nilsson R."/>
            <person name="Nishiguchi S."/>
            <person name="Nishikawa S."/>
            <person name="Nori F."/>
            <person name="Ohara O."/>
            <person name="Okazaki Y."/>
            <person name="Orlando V."/>
            <person name="Pang K.C."/>
            <person name="Pavan W.J."/>
            <person name="Pavesi G."/>
            <person name="Pesole G."/>
            <person name="Petrovsky N."/>
            <person name="Piazza S."/>
            <person name="Reed J."/>
            <person name="Reid J.F."/>
            <person name="Ring B.Z."/>
            <person name="Ringwald M."/>
            <person name="Rost B."/>
            <person name="Ruan Y."/>
            <person name="Salzberg S.L."/>
            <person name="Sandelin A."/>
            <person name="Schneider C."/>
            <person name="Schoenbach C."/>
            <person name="Sekiguchi K."/>
            <person name="Semple C.A."/>
            <person name="Seno S."/>
            <person name="Sessa L."/>
            <person name="Sheng Y."/>
            <person name="Shibata Y."/>
            <person name="Shimada H."/>
            <person name="Shimada K."/>
            <person name="Silva D."/>
            <person name="Sinclair B."/>
            <person name="Sperling S."/>
            <person name="Stupka E."/>
            <person name="Sugiura K."/>
            <person name="Sultana R."/>
            <person name="Takenaka Y."/>
            <person name="Taki K."/>
            <person name="Tammoja K."/>
            <person name="Tan S.L."/>
            <person name="Tang S."/>
            <person name="Taylor M.S."/>
            <person name="Tegner J."/>
            <person name="Teichmann S.A."/>
            <person name="Ueda H.R."/>
            <person name="van Nimwegen E."/>
            <person name="Verardo R."/>
            <person name="Wei C.L."/>
            <person name="Yagi K."/>
            <person name="Yamanishi H."/>
            <person name="Zabarovsky E."/>
            <person name="Zhu S."/>
            <person name="Zimmer A."/>
            <person name="Hide W."/>
            <person name="Bult C."/>
            <person name="Grimmond S.M."/>
            <person name="Teasdale R.D."/>
            <person name="Liu E.T."/>
            <person name="Brusic V."/>
            <person name="Quackenbush J."/>
            <person name="Wahlestedt C."/>
            <person name="Mattick J.S."/>
            <person name="Hume D.A."/>
            <person name="Kai C."/>
            <person name="Sasaki D."/>
            <person name="Tomaru Y."/>
            <person name="Fukuda S."/>
            <person name="Kanamori-Katayama M."/>
            <person name="Suzuki M."/>
            <person name="Aoki J."/>
            <person name="Arakawa T."/>
            <person name="Iida J."/>
            <person name="Imamura K."/>
            <person name="Itoh M."/>
            <person name="Kato T."/>
            <person name="Kawaji H."/>
            <person name="Kawagashira N."/>
            <person name="Kawashima T."/>
            <person name="Kojima M."/>
            <person name="Kondo S."/>
            <person name="Konno H."/>
            <person name="Nakano K."/>
            <person name="Ninomiya N."/>
            <person name="Nishio T."/>
            <person name="Okada M."/>
            <person name="Plessy C."/>
            <person name="Shibata K."/>
            <person name="Shiraki T."/>
            <person name="Suzuki S."/>
            <person name="Tagami M."/>
            <person name="Waki K."/>
            <person name="Watahiki A."/>
            <person name="Okamura-Oho Y."/>
            <person name="Suzuki H."/>
            <person name="Kawai J."/>
            <person name="Hayashizaki Y."/>
        </authorList>
    </citation>
    <scope>NUCLEOTIDE SEQUENCE [LARGE SCALE MRNA] (ISOFORM 2)</scope>
    <source>
        <strain>C57BL/6J</strain>
        <tissue>Embryonic head</tissue>
    </source>
</reference>
<reference key="3">
    <citation type="submission" date="2005-09" db="EMBL/GenBank/DDBJ databases">
        <authorList>
            <person name="Mural R.J."/>
            <person name="Adams M.D."/>
            <person name="Myers E.W."/>
            <person name="Smith H.O."/>
            <person name="Venter J.C."/>
        </authorList>
    </citation>
    <scope>NUCLEOTIDE SEQUENCE [LARGE SCALE GENOMIC DNA]</scope>
</reference>
<reference key="4">
    <citation type="journal article" date="2004" name="Genome Res.">
        <title>The status, quality, and expansion of the NIH full-length cDNA project: the Mammalian Gene Collection (MGC).</title>
        <authorList>
            <consortium name="The MGC Project Team"/>
        </authorList>
    </citation>
    <scope>NUCLEOTIDE SEQUENCE [LARGE SCALE MRNA] (ISOFORMS 1 AND 3)</scope>
    <source>
        <strain>C57BL/6J</strain>
        <tissue>Embryonic brain</tissue>
    </source>
</reference>
<reference key="5">
    <citation type="journal article" date="2007" name="Neuron">
        <title>Activity-induced protocadherin arcadlin regulates dendritic spine number by triggering N-cadherin endocytosis via TAO2beta and p38 MAP kinases.</title>
        <authorList>
            <person name="Yasuda S."/>
            <person name="Tanaka H."/>
            <person name="Sugiura H."/>
            <person name="Okamura K."/>
            <person name="Sakaguchi T."/>
            <person name="Tran U."/>
            <person name="Takemiya T."/>
            <person name="Mizoguchi A."/>
            <person name="Yagita Y."/>
            <person name="Sakurai T."/>
            <person name="De Robertis E.M."/>
            <person name="Yamagata K."/>
        </authorList>
    </citation>
    <scope>FUNCTION</scope>
</reference>
<reference key="6">
    <citation type="journal article" date="2010" name="Cell">
        <title>A tissue-specific atlas of mouse protein phosphorylation and expression.</title>
        <authorList>
            <person name="Huttlin E.L."/>
            <person name="Jedrychowski M.P."/>
            <person name="Elias J.E."/>
            <person name="Goswami T."/>
            <person name="Rad R."/>
            <person name="Beausoleil S.A."/>
            <person name="Villen J."/>
            <person name="Haas W."/>
            <person name="Sowa M.E."/>
            <person name="Gygi S.P."/>
        </authorList>
    </citation>
    <scope>IDENTIFICATION BY MASS SPECTROMETRY [LARGE SCALE ANALYSIS]</scope>
    <source>
        <tissue>Brain</tissue>
    </source>
</reference>
<keyword id="KW-0025">Alternative splicing</keyword>
<keyword id="KW-0106">Calcium</keyword>
<keyword id="KW-0130">Cell adhesion</keyword>
<keyword id="KW-1003">Cell membrane</keyword>
<keyword id="KW-0966">Cell projection</keyword>
<keyword id="KW-0325">Glycoprotein</keyword>
<keyword id="KW-0472">Membrane</keyword>
<keyword id="KW-0597">Phosphoprotein</keyword>
<keyword id="KW-0628">Postsynaptic cell membrane</keyword>
<keyword id="KW-1185">Reference proteome</keyword>
<keyword id="KW-0677">Repeat</keyword>
<keyword id="KW-0732">Signal</keyword>
<keyword id="KW-0770">Synapse</keyword>
<keyword id="KW-0812">Transmembrane</keyword>
<keyword id="KW-1133">Transmembrane helix</keyword>
<comment type="function">
    <text evidence="1 6">Calcium-dependent cell-adhesion protein (By similarity). May play a role in activity-induced synaptic reorganization underlying long term memory (By similarity). Could be involved in CDH2 internalization through TAOK2/p38 MAPK pathway (By similarity). In hippocampal neurons, may play a role in the down-regulation of dendritic spines, maybe through its action on CDH2 endocytosis.</text>
</comment>
<comment type="subunit">
    <text evidence="1">The N-terminal extracellular domain forms homophilic interactions; these interactions activate p38 MAPK via TAOK2 and trigger endocytosis. Interacts with CDH2; this interaction may lead to CDH2 cointernalization. Interacts with CDH11. Interacts with TAOK2.</text>
</comment>
<comment type="subcellular location">
    <subcellularLocation>
        <location evidence="1">Cell membrane</location>
        <topology evidence="1">Single-pass type I membrane protein</topology>
    </subcellularLocation>
    <subcellularLocation>
        <location evidence="1">Cell projection</location>
        <location evidence="1">Dendrite</location>
    </subcellularLocation>
    <subcellularLocation>
        <location>Presynaptic cell membrane</location>
    </subcellularLocation>
    <subcellularLocation>
        <location evidence="1">Postsynaptic cell membrane</location>
    </subcellularLocation>
    <text evidence="1">Expressed in neuronal cell bodies and dendrites. Localized to excitatory, but not with inhibitory, synapses.</text>
</comment>
<comment type="alternative products">
    <event type="alternative splicing"/>
    <isoform>
        <id>Q7TSK3-1</id>
        <name>1</name>
        <sequence type="displayed"/>
    </isoform>
    <isoform>
        <id>Q7TSK3-2</id>
        <name>2</name>
        <sequence type="described" ref="VSP_040562"/>
    </isoform>
    <isoform>
        <id>Q7TSK3-3</id>
        <name>3</name>
        <sequence type="described" ref="VSP_040563 VSP_040564"/>
    </isoform>
</comment>
<comment type="miscellaneous">
    <molecule>Isoform 3</molecule>
    <text evidence="9">Due to intron retention.</text>
</comment>
<feature type="signal peptide" evidence="3">
    <location>
        <begin position="1"/>
        <end position="29"/>
    </location>
</feature>
<feature type="chain" id="PRO_0000404296" description="Protocadherin-8">
    <location>
        <begin position="30"/>
        <end position="1070"/>
    </location>
</feature>
<feature type="topological domain" description="Extracellular" evidence="3">
    <location>
        <begin position="30"/>
        <end position="747"/>
    </location>
</feature>
<feature type="transmembrane region" description="Helical" evidence="3">
    <location>
        <begin position="748"/>
        <end position="768"/>
    </location>
</feature>
<feature type="topological domain" description="Cytoplasmic" evidence="3">
    <location>
        <begin position="769"/>
        <end position="1070"/>
    </location>
</feature>
<feature type="domain" description="Cadherin 1" evidence="4">
    <location>
        <begin position="30"/>
        <end position="135"/>
    </location>
</feature>
<feature type="domain" description="Cadherin 2" evidence="4">
    <location>
        <begin position="136"/>
        <end position="245"/>
    </location>
</feature>
<feature type="domain" description="Cadherin 3" evidence="4">
    <location>
        <begin position="247"/>
        <end position="354"/>
    </location>
</feature>
<feature type="domain" description="Cadherin 4" evidence="4">
    <location>
        <begin position="393"/>
        <end position="497"/>
    </location>
</feature>
<feature type="domain" description="Cadherin 5" evidence="4">
    <location>
        <begin position="498"/>
        <end position="609"/>
    </location>
</feature>
<feature type="domain" description="Cadherin 6" evidence="4">
    <location>
        <begin position="615"/>
        <end position="721"/>
    </location>
</feature>
<feature type="region of interest" description="Disordered" evidence="5">
    <location>
        <begin position="716"/>
        <end position="740"/>
    </location>
</feature>
<feature type="region of interest" description="Disordered" evidence="5">
    <location>
        <begin position="777"/>
        <end position="859"/>
    </location>
</feature>
<feature type="region of interest" description="Disordered" evidence="5">
    <location>
        <begin position="906"/>
        <end position="928"/>
    </location>
</feature>
<feature type="region of interest" description="Disordered" evidence="5">
    <location>
        <begin position="1046"/>
        <end position="1070"/>
    </location>
</feature>
<feature type="compositionally biased region" description="Low complexity" evidence="5">
    <location>
        <begin position="716"/>
        <end position="725"/>
    </location>
</feature>
<feature type="compositionally biased region" description="Basic and acidic residues" evidence="5">
    <location>
        <begin position="780"/>
        <end position="790"/>
    </location>
</feature>
<feature type="compositionally biased region" description="Basic and acidic residues" evidence="5">
    <location>
        <begin position="906"/>
        <end position="921"/>
    </location>
</feature>
<feature type="modified residue" description="Phosphoserine" evidence="2">
    <location>
        <position position="1053"/>
    </location>
</feature>
<feature type="glycosylation site" description="N-linked (GlcNAc...) asparagine" evidence="3">
    <location>
        <position position="616"/>
    </location>
</feature>
<feature type="splice variant" id="VSP_040562" description="In isoform 2." evidence="8">
    <location>
        <begin position="779"/>
        <end position="875"/>
    </location>
</feature>
<feature type="splice variant" id="VSP_040563" description="In isoform 3." evidence="7">
    <original>PYGASPGFGKEPAAPPVAVWKGHSFNTISGREAEKFSGKDSGKGDSDFNDSDSDISGDALKKDLINHMQSGLWACTAECKILGHSDRCWSP</original>
    <variation>VRPSFGWAPPSVLCGQAGRRETGGVRVGSHREMFNLSHLLFCVLSNPHTFPPPPFPAAALRCLSRLREGACCAPCYSLEGSFIQHHLGPRS</variation>
    <location>
        <begin position="876"/>
        <end position="966"/>
    </location>
</feature>
<feature type="splice variant" id="VSP_040564" description="In isoform 3." evidence="7">
    <location>
        <begin position="967"/>
        <end position="1070"/>
    </location>
</feature>
<feature type="sequence conflict" description="In Ref. 1; AAF63319." evidence="9" ref="1">
    <original>S</original>
    <variation>F</variation>
    <location>
        <position position="58"/>
    </location>
</feature>
<feature type="sequence conflict" description="In Ref. 1; AAF63319." evidence="9" ref="1">
    <original>V</original>
    <variation>A</variation>
    <location>
        <position position="160"/>
    </location>
</feature>
<feature type="sequence conflict" description="In Ref. 1; AAF63319." evidence="9" ref="1">
    <original>R</original>
    <variation>TG</variation>
    <location>
        <position position="222"/>
    </location>
</feature>
<feature type="sequence conflict" description="In Ref. 2; BAC33404." evidence="9" ref="2">
    <original>D</original>
    <variation>G</variation>
    <location>
        <position position="237"/>
    </location>
</feature>
<feature type="sequence conflict" description="In Ref. 1; AAF63319." evidence="9" ref="1">
    <original>Q</original>
    <variation>H</variation>
    <location>
        <position position="393"/>
    </location>
</feature>
<feature type="sequence conflict" description="In Ref. 1; AAF63319." evidence="9" ref="1">
    <original>E</original>
    <variation>Q</variation>
    <location>
        <position position="403"/>
    </location>
</feature>
<feature type="sequence conflict" description="In Ref. 4; AAH52388." evidence="9" ref="4">
    <original>S</original>
    <variation>P</variation>
    <location>
        <position position="590"/>
    </location>
</feature>
<accession>Q7TSK3</accession>
<accession>Q05BD0</accession>
<accession>Q8C824</accession>
<accession>Q9JKP3</accession>
<sequence length="1070" mass="113260">MSPAKRWGSPCLFPLQLFSLCWVLSVAQSKTVRYSTFEEDAPGTVIGTLAEDLHMKVSGDTSFRLMKQFNSSLLRVREGDGQLTVGDAGLDRERLCGPSPQCVLAFDVVSFSQEQFRLVHVEVEVRDVNDHAPRFPRAQIPVEVSESAPVGTRIPLEVPVDEDVGANGLQSVRLAEPHSPFRVELQTRADGAQCADLVLLQELDRESQASYSLELVAQDGGRPPRSATAALSVRVLDANDHSPAFPQGAVAEVELAEDAPVGSLLLDLDAADPDEGPNGDVVFTFGARTPPEARHLFRLDPRSGRLTLAGQVDYERQDTYELDVRAQDRGPGPRTATCKVIVRIRDVNDNAPEISITPLAAPGAPATSPFAAAAAAAALGGADAASSTGSGTQEAGITSLVPEGAARESLVALVSTSDRDSGANGQVRCALYGHEHFRLQPAYAGSYLVVTAASLDRERIAEYNLTLVAEDRGTPPLRTVRPYTVRVGDENDNAPIFTKPVYEVSVRENNPPGAYLATVAARDPDVGRNGQVTYRLVEAEVGRSGEAVSTYVSVDPATGAIYALRSFDYETLRQLDVRVQASDGGSPQLSSNALVQVRVLDQNDHSPILVHPAPANGSLEVAVPGRSTKDTAVARIQARDADEGANGELAFDLLQQEPREAFSIGRHTGEIMLTGDLSQEPPGRVFKALLVISDGGRPPLTTTATVSFVVTAGGGSAVPASSGSPEHSRPPGSRLAPSGPSLQWDTPLIVIIVLAGSCTLLLAAIIAIATTCNRRKKEVRKGGALREERPGAAGGGASAPGSPDETARGTGPRPNMFDVLTFPGSGKAPFGSPAADAPPPAVAAAEVPGSEGGSATGESACHFEGQQRLRGAHAEPYGASPGFGKEPAAPPVAVWKGHSFNTISGREAEKFSGKDSGKGDSDFNDSDSDISGDALKKDLINHMQSGLWACTAECKILGHSDRCWSPSCAGPNVHPPPHPPAQMSTFCKSTSLPRDPLRRDNYYQAQLPKTVGLQSVYEKVLHRDYDRTVTLLSPPRPGRLPDLQEIGVPLYESPPGSRYVSPKKGINENV</sequence>